<dbReference type="EC" id="6.1.1.12" evidence="1"/>
<dbReference type="EMBL" id="CP001022">
    <property type="protein sequence ID" value="ACB61538.1"/>
    <property type="molecule type" value="Genomic_DNA"/>
</dbReference>
<dbReference type="RefSeq" id="WP_012370955.1">
    <property type="nucleotide sequence ID" value="NC_010556.1"/>
</dbReference>
<dbReference type="SMR" id="B1YJF7"/>
<dbReference type="STRING" id="262543.Exig_2086"/>
<dbReference type="KEGG" id="esi:Exig_2086"/>
<dbReference type="eggNOG" id="COG0173">
    <property type="taxonomic scope" value="Bacteria"/>
</dbReference>
<dbReference type="HOGENOM" id="CLU_014330_3_2_9"/>
<dbReference type="OrthoDB" id="9802326at2"/>
<dbReference type="Proteomes" id="UP000001681">
    <property type="component" value="Chromosome"/>
</dbReference>
<dbReference type="GO" id="GO:0005737">
    <property type="term" value="C:cytoplasm"/>
    <property type="evidence" value="ECO:0007669"/>
    <property type="project" value="UniProtKB-SubCell"/>
</dbReference>
<dbReference type="GO" id="GO:0004815">
    <property type="term" value="F:aspartate-tRNA ligase activity"/>
    <property type="evidence" value="ECO:0007669"/>
    <property type="project" value="UniProtKB-UniRule"/>
</dbReference>
<dbReference type="GO" id="GO:0005524">
    <property type="term" value="F:ATP binding"/>
    <property type="evidence" value="ECO:0007669"/>
    <property type="project" value="UniProtKB-UniRule"/>
</dbReference>
<dbReference type="GO" id="GO:0140096">
    <property type="term" value="F:catalytic activity, acting on a protein"/>
    <property type="evidence" value="ECO:0007669"/>
    <property type="project" value="UniProtKB-ARBA"/>
</dbReference>
<dbReference type="GO" id="GO:0003676">
    <property type="term" value="F:nucleic acid binding"/>
    <property type="evidence" value="ECO:0007669"/>
    <property type="project" value="InterPro"/>
</dbReference>
<dbReference type="GO" id="GO:0016740">
    <property type="term" value="F:transferase activity"/>
    <property type="evidence" value="ECO:0007669"/>
    <property type="project" value="UniProtKB-ARBA"/>
</dbReference>
<dbReference type="GO" id="GO:0006422">
    <property type="term" value="P:aspartyl-tRNA aminoacylation"/>
    <property type="evidence" value="ECO:0007669"/>
    <property type="project" value="UniProtKB-UniRule"/>
</dbReference>
<dbReference type="CDD" id="cd00777">
    <property type="entry name" value="AspRS_core"/>
    <property type="match status" value="1"/>
</dbReference>
<dbReference type="CDD" id="cd04317">
    <property type="entry name" value="EcAspRS_like_N"/>
    <property type="match status" value="1"/>
</dbReference>
<dbReference type="Gene3D" id="3.30.930.10">
    <property type="entry name" value="Bira Bifunctional Protein, Domain 2"/>
    <property type="match status" value="1"/>
</dbReference>
<dbReference type="Gene3D" id="3.30.1360.30">
    <property type="entry name" value="GAD-like domain"/>
    <property type="match status" value="1"/>
</dbReference>
<dbReference type="Gene3D" id="2.40.50.140">
    <property type="entry name" value="Nucleic acid-binding proteins"/>
    <property type="match status" value="1"/>
</dbReference>
<dbReference type="HAMAP" id="MF_00044">
    <property type="entry name" value="Asp_tRNA_synth_type1"/>
    <property type="match status" value="1"/>
</dbReference>
<dbReference type="InterPro" id="IPR004364">
    <property type="entry name" value="Aa-tRNA-synt_II"/>
</dbReference>
<dbReference type="InterPro" id="IPR006195">
    <property type="entry name" value="aa-tRNA-synth_II"/>
</dbReference>
<dbReference type="InterPro" id="IPR045864">
    <property type="entry name" value="aa-tRNA-synth_II/BPL/LPL"/>
</dbReference>
<dbReference type="InterPro" id="IPR004524">
    <property type="entry name" value="Asp-tRNA-ligase_1"/>
</dbReference>
<dbReference type="InterPro" id="IPR047089">
    <property type="entry name" value="Asp-tRNA-ligase_1_N"/>
</dbReference>
<dbReference type="InterPro" id="IPR002312">
    <property type="entry name" value="Asp/Asn-tRNA-synth_IIb"/>
</dbReference>
<dbReference type="InterPro" id="IPR047090">
    <property type="entry name" value="AspRS_core"/>
</dbReference>
<dbReference type="InterPro" id="IPR004115">
    <property type="entry name" value="GAD-like_sf"/>
</dbReference>
<dbReference type="InterPro" id="IPR029351">
    <property type="entry name" value="GAD_dom"/>
</dbReference>
<dbReference type="InterPro" id="IPR012340">
    <property type="entry name" value="NA-bd_OB-fold"/>
</dbReference>
<dbReference type="InterPro" id="IPR004365">
    <property type="entry name" value="NA-bd_OB_tRNA"/>
</dbReference>
<dbReference type="NCBIfam" id="TIGR00459">
    <property type="entry name" value="aspS_bact"/>
    <property type="match status" value="1"/>
</dbReference>
<dbReference type="NCBIfam" id="NF001750">
    <property type="entry name" value="PRK00476.1"/>
    <property type="match status" value="1"/>
</dbReference>
<dbReference type="PANTHER" id="PTHR22594:SF5">
    <property type="entry name" value="ASPARTATE--TRNA LIGASE, MITOCHONDRIAL"/>
    <property type="match status" value="1"/>
</dbReference>
<dbReference type="PANTHER" id="PTHR22594">
    <property type="entry name" value="ASPARTYL/LYSYL-TRNA SYNTHETASE"/>
    <property type="match status" value="1"/>
</dbReference>
<dbReference type="Pfam" id="PF02938">
    <property type="entry name" value="GAD"/>
    <property type="match status" value="1"/>
</dbReference>
<dbReference type="Pfam" id="PF00152">
    <property type="entry name" value="tRNA-synt_2"/>
    <property type="match status" value="1"/>
</dbReference>
<dbReference type="Pfam" id="PF01336">
    <property type="entry name" value="tRNA_anti-codon"/>
    <property type="match status" value="1"/>
</dbReference>
<dbReference type="PRINTS" id="PR01042">
    <property type="entry name" value="TRNASYNTHASP"/>
</dbReference>
<dbReference type="SUPFAM" id="SSF55681">
    <property type="entry name" value="Class II aaRS and biotin synthetases"/>
    <property type="match status" value="1"/>
</dbReference>
<dbReference type="SUPFAM" id="SSF55261">
    <property type="entry name" value="GAD domain-like"/>
    <property type="match status" value="1"/>
</dbReference>
<dbReference type="SUPFAM" id="SSF50249">
    <property type="entry name" value="Nucleic acid-binding proteins"/>
    <property type="match status" value="1"/>
</dbReference>
<dbReference type="PROSITE" id="PS50862">
    <property type="entry name" value="AA_TRNA_LIGASE_II"/>
    <property type="match status" value="1"/>
</dbReference>
<feature type="chain" id="PRO_1000090995" description="Aspartate--tRNA ligase">
    <location>
        <begin position="1"/>
        <end position="588"/>
    </location>
</feature>
<feature type="region of interest" description="Aspartate" evidence="1">
    <location>
        <begin position="198"/>
        <end position="201"/>
    </location>
</feature>
<feature type="binding site" evidence="1">
    <location>
        <position position="174"/>
    </location>
    <ligand>
        <name>L-aspartate</name>
        <dbReference type="ChEBI" id="CHEBI:29991"/>
    </ligand>
</feature>
<feature type="binding site" evidence="1">
    <location>
        <begin position="220"/>
        <end position="222"/>
    </location>
    <ligand>
        <name>ATP</name>
        <dbReference type="ChEBI" id="CHEBI:30616"/>
    </ligand>
</feature>
<feature type="binding site" evidence="1">
    <location>
        <position position="220"/>
    </location>
    <ligand>
        <name>L-aspartate</name>
        <dbReference type="ChEBI" id="CHEBI:29991"/>
    </ligand>
</feature>
<feature type="binding site" evidence="1">
    <location>
        <position position="229"/>
    </location>
    <ligand>
        <name>ATP</name>
        <dbReference type="ChEBI" id="CHEBI:30616"/>
    </ligand>
</feature>
<feature type="binding site" evidence="1">
    <location>
        <position position="448"/>
    </location>
    <ligand>
        <name>L-aspartate</name>
        <dbReference type="ChEBI" id="CHEBI:29991"/>
    </ligand>
</feature>
<feature type="binding site" evidence="1">
    <location>
        <position position="482"/>
    </location>
    <ligand>
        <name>ATP</name>
        <dbReference type="ChEBI" id="CHEBI:30616"/>
    </ligand>
</feature>
<feature type="binding site" evidence="1">
    <location>
        <position position="489"/>
    </location>
    <ligand>
        <name>L-aspartate</name>
        <dbReference type="ChEBI" id="CHEBI:29991"/>
    </ligand>
</feature>
<feature type="binding site" evidence="1">
    <location>
        <begin position="534"/>
        <end position="537"/>
    </location>
    <ligand>
        <name>ATP</name>
        <dbReference type="ChEBI" id="CHEBI:30616"/>
    </ligand>
</feature>
<keyword id="KW-0030">Aminoacyl-tRNA synthetase</keyword>
<keyword id="KW-0067">ATP-binding</keyword>
<keyword id="KW-0963">Cytoplasm</keyword>
<keyword id="KW-0436">Ligase</keyword>
<keyword id="KW-0547">Nucleotide-binding</keyword>
<keyword id="KW-0648">Protein biosynthesis</keyword>
<keyword id="KW-1185">Reference proteome</keyword>
<organism>
    <name type="scientific">Exiguobacterium sibiricum (strain DSM 17290 / CCUG 55495 / CIP 109462 / JCM 13490 / 255-15)</name>
    <dbReference type="NCBI Taxonomy" id="262543"/>
    <lineage>
        <taxon>Bacteria</taxon>
        <taxon>Bacillati</taxon>
        <taxon>Bacillota</taxon>
        <taxon>Bacilli</taxon>
        <taxon>Bacillales</taxon>
        <taxon>Bacillales Family XII. Incertae Sedis</taxon>
        <taxon>Exiguobacterium</taxon>
    </lineage>
</organism>
<accession>B1YJF7</accession>
<evidence type="ECO:0000255" key="1">
    <source>
        <dbReference type="HAMAP-Rule" id="MF_00044"/>
    </source>
</evidence>
<name>SYD_EXIS2</name>
<comment type="function">
    <text evidence="1">Catalyzes the attachment of L-aspartate to tRNA(Asp) in a two-step reaction: L-aspartate is first activated by ATP to form Asp-AMP and then transferred to the acceptor end of tRNA(Asp).</text>
</comment>
<comment type="catalytic activity">
    <reaction evidence="1">
        <text>tRNA(Asp) + L-aspartate + ATP = L-aspartyl-tRNA(Asp) + AMP + diphosphate</text>
        <dbReference type="Rhea" id="RHEA:19649"/>
        <dbReference type="Rhea" id="RHEA-COMP:9660"/>
        <dbReference type="Rhea" id="RHEA-COMP:9678"/>
        <dbReference type="ChEBI" id="CHEBI:29991"/>
        <dbReference type="ChEBI" id="CHEBI:30616"/>
        <dbReference type="ChEBI" id="CHEBI:33019"/>
        <dbReference type="ChEBI" id="CHEBI:78442"/>
        <dbReference type="ChEBI" id="CHEBI:78516"/>
        <dbReference type="ChEBI" id="CHEBI:456215"/>
        <dbReference type="EC" id="6.1.1.12"/>
    </reaction>
</comment>
<comment type="subunit">
    <text evidence="1">Homodimer.</text>
</comment>
<comment type="subcellular location">
    <subcellularLocation>
        <location evidence="1">Cytoplasm</location>
    </subcellularLocation>
</comment>
<comment type="similarity">
    <text evidence="1">Belongs to the class-II aminoacyl-tRNA synthetase family. Type 1 subfamily.</text>
</comment>
<reference key="1">
    <citation type="submission" date="2008-04" db="EMBL/GenBank/DDBJ databases">
        <title>Complete sequence of chromosome of Exiguobacterium sibiricum 255-15.</title>
        <authorList>
            <consortium name="US DOE Joint Genome Institute"/>
            <person name="Copeland A."/>
            <person name="Lucas S."/>
            <person name="Lapidus A."/>
            <person name="Glavina del Rio T."/>
            <person name="Dalin E."/>
            <person name="Tice H."/>
            <person name="Bruce D."/>
            <person name="Goodwin L."/>
            <person name="Pitluck S."/>
            <person name="Kiss H."/>
            <person name="Chertkov O."/>
            <person name="Monk C."/>
            <person name="Brettin T."/>
            <person name="Detter J.C."/>
            <person name="Han C."/>
            <person name="Kuske C.R."/>
            <person name="Schmutz J."/>
            <person name="Larimer F."/>
            <person name="Land M."/>
            <person name="Hauser L."/>
            <person name="Kyrpides N."/>
            <person name="Mikhailova N."/>
            <person name="Vishnivetskaya T."/>
            <person name="Rodrigues D.F."/>
            <person name="Gilichinsky D."/>
            <person name="Tiedje J."/>
            <person name="Richardson P."/>
        </authorList>
    </citation>
    <scope>NUCLEOTIDE SEQUENCE [LARGE SCALE GENOMIC DNA]</scope>
    <source>
        <strain>DSM 17290 / CCUG 55495 / CIP 109462 / JCM 13490 / 255-15</strain>
    </source>
</reference>
<sequence length="588" mass="65844">MIGRTHMNGTVTEETIGQAVQLKGWVQKRRDLGGLIFLDLRDRTGIVQVVFQPENEQAHRLAESIRSEYVLDIKGTVVQRENPNPNIPTGQVEVVADEVIILNASKMTPFPISEEAEQTSEDLRLKYRYLDLRRPSLQETFRLRSKASNIMRNFLDEQDFLEVETPILTKSTPEGARDYLVPSRVHPGEFYALPQSPQLFKQLLMVSGFERYFQIARCFRDEDLRADRQPEFTQVDIETSFMDVEDLYAMMESMMTRVMKETLGKDITTPFPRMPYAEAMSRFGSDKPDTRFGLELIDVAEAVTGAGFKVFDMALESGGEVKALNVKGAADQFSRKDIDKLQEFTAIYGAKGLAWVKVTADGLNGPIAKFFDEAATARLVEATTAEAGDLLVFVAAKASIVADSLGALRQKLGKELGLIDETVFNFLWVTDFPLVTFEEADSRFYANHHPFTMPRREDLDKLETDPGSVLAVAYDLVLNGYELGGGSQRIYERDIQERMFKLLGFTEEEANEQFGFLMEAFEYGTPPHAGIALGLDRLIMLLAGRTNLRDTIAFPKTASASDLLTAAPSPVSDAQLNELSIRTAVKQS</sequence>
<gene>
    <name evidence="1" type="primary">aspS</name>
    <name type="ordered locus">Exig_2086</name>
</gene>
<proteinExistence type="inferred from homology"/>
<protein>
    <recommendedName>
        <fullName evidence="1">Aspartate--tRNA ligase</fullName>
        <ecNumber evidence="1">6.1.1.12</ecNumber>
    </recommendedName>
    <alternativeName>
        <fullName evidence="1">Aspartyl-tRNA synthetase</fullName>
        <shortName evidence="1">AspRS</shortName>
    </alternativeName>
</protein>